<proteinExistence type="inferred from homology"/>
<protein>
    <recommendedName>
        <fullName evidence="1">Elongation factor 4</fullName>
        <shortName evidence="1">EF-4</shortName>
        <ecNumber evidence="1">3.6.5.n1</ecNumber>
    </recommendedName>
    <alternativeName>
        <fullName evidence="1">Ribosomal back-translocase LepA</fullName>
    </alternativeName>
</protein>
<dbReference type="EC" id="3.6.5.n1" evidence="1"/>
<dbReference type="EMBL" id="AL954747">
    <property type="protein sequence ID" value="CAD86239.1"/>
    <property type="molecule type" value="Genomic_DNA"/>
</dbReference>
<dbReference type="SMR" id="Q820H8"/>
<dbReference type="STRING" id="228410.NE2327"/>
<dbReference type="KEGG" id="neu:NE2327"/>
<dbReference type="eggNOG" id="COG0481">
    <property type="taxonomic scope" value="Bacteria"/>
</dbReference>
<dbReference type="HOGENOM" id="CLU_009995_3_3_4"/>
<dbReference type="PhylomeDB" id="Q820H8"/>
<dbReference type="Proteomes" id="UP000001416">
    <property type="component" value="Chromosome"/>
</dbReference>
<dbReference type="GO" id="GO:0005886">
    <property type="term" value="C:plasma membrane"/>
    <property type="evidence" value="ECO:0007669"/>
    <property type="project" value="UniProtKB-SubCell"/>
</dbReference>
<dbReference type="GO" id="GO:0005525">
    <property type="term" value="F:GTP binding"/>
    <property type="evidence" value="ECO:0007669"/>
    <property type="project" value="UniProtKB-UniRule"/>
</dbReference>
<dbReference type="GO" id="GO:0003924">
    <property type="term" value="F:GTPase activity"/>
    <property type="evidence" value="ECO:0007669"/>
    <property type="project" value="UniProtKB-UniRule"/>
</dbReference>
<dbReference type="GO" id="GO:0097216">
    <property type="term" value="F:guanosine tetraphosphate binding"/>
    <property type="evidence" value="ECO:0007669"/>
    <property type="project" value="UniProtKB-ARBA"/>
</dbReference>
<dbReference type="GO" id="GO:0043022">
    <property type="term" value="F:ribosome binding"/>
    <property type="evidence" value="ECO:0007669"/>
    <property type="project" value="UniProtKB-UniRule"/>
</dbReference>
<dbReference type="GO" id="GO:0003746">
    <property type="term" value="F:translation elongation factor activity"/>
    <property type="evidence" value="ECO:0007669"/>
    <property type="project" value="UniProtKB-UniRule"/>
</dbReference>
<dbReference type="GO" id="GO:0045727">
    <property type="term" value="P:positive regulation of translation"/>
    <property type="evidence" value="ECO:0007669"/>
    <property type="project" value="UniProtKB-UniRule"/>
</dbReference>
<dbReference type="CDD" id="cd16260">
    <property type="entry name" value="EF4_III"/>
    <property type="match status" value="1"/>
</dbReference>
<dbReference type="CDD" id="cd01890">
    <property type="entry name" value="LepA"/>
    <property type="match status" value="1"/>
</dbReference>
<dbReference type="CDD" id="cd03709">
    <property type="entry name" value="lepA_C"/>
    <property type="match status" value="1"/>
</dbReference>
<dbReference type="FunFam" id="3.40.50.300:FF:000078">
    <property type="entry name" value="Elongation factor 4"/>
    <property type="match status" value="1"/>
</dbReference>
<dbReference type="FunFam" id="2.40.30.10:FF:000015">
    <property type="entry name" value="Translation factor GUF1, mitochondrial"/>
    <property type="match status" value="1"/>
</dbReference>
<dbReference type="FunFam" id="3.30.70.240:FF:000007">
    <property type="entry name" value="Translation factor GUF1, mitochondrial"/>
    <property type="match status" value="1"/>
</dbReference>
<dbReference type="FunFam" id="3.30.70.2570:FF:000001">
    <property type="entry name" value="Translation factor GUF1, mitochondrial"/>
    <property type="match status" value="1"/>
</dbReference>
<dbReference type="FunFam" id="3.30.70.870:FF:000004">
    <property type="entry name" value="Translation factor GUF1, mitochondrial"/>
    <property type="match status" value="1"/>
</dbReference>
<dbReference type="Gene3D" id="3.30.70.240">
    <property type="match status" value="1"/>
</dbReference>
<dbReference type="Gene3D" id="3.30.70.2570">
    <property type="entry name" value="Elongation factor 4, C-terminal domain"/>
    <property type="match status" value="1"/>
</dbReference>
<dbReference type="Gene3D" id="3.30.70.870">
    <property type="entry name" value="Elongation Factor G (Translational Gtpase), domain 3"/>
    <property type="match status" value="1"/>
</dbReference>
<dbReference type="Gene3D" id="3.40.50.300">
    <property type="entry name" value="P-loop containing nucleotide triphosphate hydrolases"/>
    <property type="match status" value="1"/>
</dbReference>
<dbReference type="Gene3D" id="2.40.30.10">
    <property type="entry name" value="Translation factors"/>
    <property type="match status" value="1"/>
</dbReference>
<dbReference type="HAMAP" id="MF_00071">
    <property type="entry name" value="LepA"/>
    <property type="match status" value="1"/>
</dbReference>
<dbReference type="InterPro" id="IPR006297">
    <property type="entry name" value="EF-4"/>
</dbReference>
<dbReference type="InterPro" id="IPR041095">
    <property type="entry name" value="EFG_II"/>
</dbReference>
<dbReference type="InterPro" id="IPR035647">
    <property type="entry name" value="EFG_III/V"/>
</dbReference>
<dbReference type="InterPro" id="IPR000640">
    <property type="entry name" value="EFG_V-like"/>
</dbReference>
<dbReference type="InterPro" id="IPR004161">
    <property type="entry name" value="EFTu-like_2"/>
</dbReference>
<dbReference type="InterPro" id="IPR031157">
    <property type="entry name" value="G_TR_CS"/>
</dbReference>
<dbReference type="InterPro" id="IPR038363">
    <property type="entry name" value="LepA_C_sf"/>
</dbReference>
<dbReference type="InterPro" id="IPR013842">
    <property type="entry name" value="LepA_CTD"/>
</dbReference>
<dbReference type="InterPro" id="IPR035654">
    <property type="entry name" value="LepA_IV"/>
</dbReference>
<dbReference type="InterPro" id="IPR027417">
    <property type="entry name" value="P-loop_NTPase"/>
</dbReference>
<dbReference type="InterPro" id="IPR005225">
    <property type="entry name" value="Small_GTP-bd"/>
</dbReference>
<dbReference type="InterPro" id="IPR000795">
    <property type="entry name" value="T_Tr_GTP-bd_dom"/>
</dbReference>
<dbReference type="InterPro" id="IPR009000">
    <property type="entry name" value="Transl_B-barrel_sf"/>
</dbReference>
<dbReference type="NCBIfam" id="TIGR01393">
    <property type="entry name" value="lepA"/>
    <property type="match status" value="1"/>
</dbReference>
<dbReference type="NCBIfam" id="TIGR00231">
    <property type="entry name" value="small_GTP"/>
    <property type="match status" value="1"/>
</dbReference>
<dbReference type="PANTHER" id="PTHR43512:SF4">
    <property type="entry name" value="TRANSLATION FACTOR GUF1 HOMOLOG, CHLOROPLASTIC"/>
    <property type="match status" value="1"/>
</dbReference>
<dbReference type="PANTHER" id="PTHR43512">
    <property type="entry name" value="TRANSLATION FACTOR GUF1-RELATED"/>
    <property type="match status" value="1"/>
</dbReference>
<dbReference type="Pfam" id="PF00679">
    <property type="entry name" value="EFG_C"/>
    <property type="match status" value="1"/>
</dbReference>
<dbReference type="Pfam" id="PF14492">
    <property type="entry name" value="EFG_III"/>
    <property type="match status" value="1"/>
</dbReference>
<dbReference type="Pfam" id="PF00009">
    <property type="entry name" value="GTP_EFTU"/>
    <property type="match status" value="1"/>
</dbReference>
<dbReference type="Pfam" id="PF03144">
    <property type="entry name" value="GTP_EFTU_D2"/>
    <property type="match status" value="1"/>
</dbReference>
<dbReference type="Pfam" id="PF06421">
    <property type="entry name" value="LepA_C"/>
    <property type="match status" value="1"/>
</dbReference>
<dbReference type="PRINTS" id="PR00315">
    <property type="entry name" value="ELONGATNFCT"/>
</dbReference>
<dbReference type="SMART" id="SM00838">
    <property type="entry name" value="EFG_C"/>
    <property type="match status" value="1"/>
</dbReference>
<dbReference type="SUPFAM" id="SSF54980">
    <property type="entry name" value="EF-G C-terminal domain-like"/>
    <property type="match status" value="2"/>
</dbReference>
<dbReference type="SUPFAM" id="SSF52540">
    <property type="entry name" value="P-loop containing nucleoside triphosphate hydrolases"/>
    <property type="match status" value="1"/>
</dbReference>
<dbReference type="SUPFAM" id="SSF50447">
    <property type="entry name" value="Translation proteins"/>
    <property type="match status" value="1"/>
</dbReference>
<dbReference type="PROSITE" id="PS00301">
    <property type="entry name" value="G_TR_1"/>
    <property type="match status" value="1"/>
</dbReference>
<dbReference type="PROSITE" id="PS51722">
    <property type="entry name" value="G_TR_2"/>
    <property type="match status" value="1"/>
</dbReference>
<name>LEPA_NITEU</name>
<keyword id="KW-0997">Cell inner membrane</keyword>
<keyword id="KW-1003">Cell membrane</keyword>
<keyword id="KW-0342">GTP-binding</keyword>
<keyword id="KW-0378">Hydrolase</keyword>
<keyword id="KW-0472">Membrane</keyword>
<keyword id="KW-0547">Nucleotide-binding</keyword>
<keyword id="KW-0648">Protein biosynthesis</keyword>
<keyword id="KW-1185">Reference proteome</keyword>
<reference key="1">
    <citation type="journal article" date="2003" name="J. Bacteriol.">
        <title>Complete genome sequence of the ammonia-oxidizing bacterium and obligate chemolithoautotroph Nitrosomonas europaea.</title>
        <authorList>
            <person name="Chain P."/>
            <person name="Lamerdin J.E."/>
            <person name="Larimer F.W."/>
            <person name="Regala W."/>
            <person name="Lao V."/>
            <person name="Land M.L."/>
            <person name="Hauser L."/>
            <person name="Hooper A.B."/>
            <person name="Klotz M.G."/>
            <person name="Norton J."/>
            <person name="Sayavedra-Soto L.A."/>
            <person name="Arciero D.M."/>
            <person name="Hommes N.G."/>
            <person name="Whittaker M.M."/>
            <person name="Arp D.J."/>
        </authorList>
    </citation>
    <scope>NUCLEOTIDE SEQUENCE [LARGE SCALE GENOMIC DNA]</scope>
    <source>
        <strain>ATCC 19718 / CIP 103999 / KCTC 2705 / NBRC 14298</strain>
    </source>
</reference>
<feature type="chain" id="PRO_0000176310" description="Elongation factor 4">
    <location>
        <begin position="1"/>
        <end position="598"/>
    </location>
</feature>
<feature type="domain" description="tr-type G">
    <location>
        <begin position="3"/>
        <end position="185"/>
    </location>
</feature>
<feature type="binding site" evidence="1">
    <location>
        <begin position="15"/>
        <end position="20"/>
    </location>
    <ligand>
        <name>GTP</name>
        <dbReference type="ChEBI" id="CHEBI:37565"/>
    </ligand>
</feature>
<feature type="binding site" evidence="1">
    <location>
        <begin position="132"/>
        <end position="135"/>
    </location>
    <ligand>
        <name>GTP</name>
        <dbReference type="ChEBI" id="CHEBI:37565"/>
    </ligand>
</feature>
<evidence type="ECO:0000255" key="1">
    <source>
        <dbReference type="HAMAP-Rule" id="MF_00071"/>
    </source>
</evidence>
<organism>
    <name type="scientific">Nitrosomonas europaea (strain ATCC 19718 / CIP 103999 / KCTC 2705 / NBRC 14298)</name>
    <dbReference type="NCBI Taxonomy" id="228410"/>
    <lineage>
        <taxon>Bacteria</taxon>
        <taxon>Pseudomonadati</taxon>
        <taxon>Pseudomonadota</taxon>
        <taxon>Betaproteobacteria</taxon>
        <taxon>Nitrosomonadales</taxon>
        <taxon>Nitrosomonadaceae</taxon>
        <taxon>Nitrosomonas</taxon>
    </lineage>
</organism>
<accession>Q820H8</accession>
<sequence length="598" mass="66095">MIQHIRNFSIIAHIDHGKSTLADRIIQFCGGLSDREMEDQVLDSMDLERERGITIKAQTAALHYQAKDGKNYLLNLIDTPGHVDFSYEVSRSLSACEGALLVVDASQGVEAQTVANCYTAIEQGVEVIPVLNKIDLPAADPDRVIAEVEDIIGIEAKGALRISAKTGEGVDQVLEMIVAQIPPPEGDVDAPLKALIIDSWFDSYVGVVMLVRVVDGVLRPGNKILLMSSKANYLCEEVGVFQPKAVSHKSLSAGEVGFIISGIKDLKSAKVGDTVTLADRPAGEPLAGFKEIKPQVFAGLYPVESNQYDALRAALEKLQLNDASLHFEPETSQALGFGFRCGFLGLLHLDIVQERLEREYDMDLITTAPTVVYQVVLRDGKITEIENPSRLPDLSSIEEIREPIITATILVPEEYVGTVMTLCTGKRGIQKNMQYMGRQVMLVYEMPLNEVVMDFFDRLKSVSRGYASLDYEFKEFRAADLVKLDILINSDRVDALSLIVHRASSQHRGRELAQKMRELIPRQMFDIAVQAAIGAHIVARENVKALRKNVLAKCYGGDITRKRKLLEKQKAGKKRMKRVGNVEIPQAAFLAILQVDGK</sequence>
<comment type="function">
    <text evidence="1">Required for accurate and efficient protein synthesis under certain stress conditions. May act as a fidelity factor of the translation reaction, by catalyzing a one-codon backward translocation of tRNAs on improperly translocated ribosomes. Back-translocation proceeds from a post-translocation (POST) complex to a pre-translocation (PRE) complex, thus giving elongation factor G a second chance to translocate the tRNAs correctly. Binds to ribosomes in a GTP-dependent manner.</text>
</comment>
<comment type="catalytic activity">
    <reaction evidence="1">
        <text>GTP + H2O = GDP + phosphate + H(+)</text>
        <dbReference type="Rhea" id="RHEA:19669"/>
        <dbReference type="ChEBI" id="CHEBI:15377"/>
        <dbReference type="ChEBI" id="CHEBI:15378"/>
        <dbReference type="ChEBI" id="CHEBI:37565"/>
        <dbReference type="ChEBI" id="CHEBI:43474"/>
        <dbReference type="ChEBI" id="CHEBI:58189"/>
        <dbReference type="EC" id="3.6.5.n1"/>
    </reaction>
</comment>
<comment type="subcellular location">
    <subcellularLocation>
        <location evidence="1">Cell inner membrane</location>
        <topology evidence="1">Peripheral membrane protein</topology>
        <orientation evidence="1">Cytoplasmic side</orientation>
    </subcellularLocation>
</comment>
<comment type="similarity">
    <text evidence="1">Belongs to the TRAFAC class translation factor GTPase superfamily. Classic translation factor GTPase family. LepA subfamily.</text>
</comment>
<gene>
    <name evidence="1" type="primary">lepA</name>
    <name type="ordered locus">NE2327</name>
</gene>